<name>MOAE_PYRAB</name>
<keyword id="KW-0501">Molybdenum cofactor biosynthesis</keyword>
<keyword id="KW-0808">Transferase</keyword>
<sequence length="148" mass="17033">MGKSKVSLVKKPEDFNIEEAIALVSSSSTGGIVIFLGKVRDENLGRKVEKLIYEAYDEMAIKEMERIRNEALDRFPIVDALIWHRIGELEVGENTILVVVSAKHRREAFEACAWIVDEVKKRVPVWKREVTDEGEFWIEGDRHVPVKR</sequence>
<protein>
    <recommendedName>
        <fullName>Molybdopterin synthase catalytic subunit</fullName>
        <ecNumber>2.8.1.12</ecNumber>
    </recommendedName>
    <alternativeName>
        <fullName>MPT synthase subunit 2</fullName>
    </alternativeName>
    <alternativeName>
        <fullName>Molybdenum cofactor biosynthesis protein E</fullName>
    </alternativeName>
    <alternativeName>
        <fullName>Molybdopterin-converting factor large subunit</fullName>
    </alternativeName>
    <alternativeName>
        <fullName>Molybdopterin-converting factor subunit 2</fullName>
    </alternativeName>
</protein>
<comment type="function">
    <text evidence="1">Converts molybdopterin precursor Z into molybdopterin. This requires the incorporation of two sulfur atoms into precursor Z to generate a dithiolene group. The sulfur is provided by MoaD (By similarity).</text>
</comment>
<comment type="catalytic activity">
    <reaction>
        <text>2 [molybdopterin-synthase sulfur-carrier protein]-C-terminal-Gly-aminoethanethioate + cyclic pyranopterin phosphate + H2O = molybdopterin + 2 [molybdopterin-synthase sulfur-carrier protein]-C-terminal Gly-Gly + 2 H(+)</text>
        <dbReference type="Rhea" id="RHEA:26333"/>
        <dbReference type="Rhea" id="RHEA-COMP:12202"/>
        <dbReference type="Rhea" id="RHEA-COMP:19907"/>
        <dbReference type="ChEBI" id="CHEBI:15377"/>
        <dbReference type="ChEBI" id="CHEBI:15378"/>
        <dbReference type="ChEBI" id="CHEBI:58698"/>
        <dbReference type="ChEBI" id="CHEBI:59648"/>
        <dbReference type="ChEBI" id="CHEBI:90778"/>
        <dbReference type="ChEBI" id="CHEBI:232372"/>
        <dbReference type="EC" id="2.8.1.12"/>
    </reaction>
</comment>
<comment type="pathway">
    <text>Cofactor biosynthesis; molybdopterin biosynthesis.</text>
</comment>
<comment type="subunit">
    <text evidence="1">Heterotetramer of 2 MoaD subunits and 2 MoaE subunits. Also stable as homodimer. The enzyme changes between these two forms during catalysis (By similarity).</text>
</comment>
<comment type="similarity">
    <text evidence="2">Belongs to the MoaE family.</text>
</comment>
<proteinExistence type="inferred from homology"/>
<accession>Q9V2A7</accession>
<accession>G8ZG02</accession>
<dbReference type="EC" id="2.8.1.12"/>
<dbReference type="EMBL" id="AJ248283">
    <property type="protein sequence ID" value="CAB49091.1"/>
    <property type="molecule type" value="Genomic_DNA"/>
</dbReference>
<dbReference type="EMBL" id="HE613800">
    <property type="protein sequence ID" value="CCE69543.1"/>
    <property type="molecule type" value="Genomic_DNA"/>
</dbReference>
<dbReference type="PIR" id="D75205">
    <property type="entry name" value="D75205"/>
</dbReference>
<dbReference type="RefSeq" id="WP_010867291.1">
    <property type="nucleotide sequence ID" value="NC_000868.1"/>
</dbReference>
<dbReference type="SMR" id="Q9V2A7"/>
<dbReference type="STRING" id="272844.PAB0110"/>
<dbReference type="KEGG" id="pab:PAB0110"/>
<dbReference type="PATRIC" id="fig|272844.11.peg.182"/>
<dbReference type="eggNOG" id="arCOG00534">
    <property type="taxonomic scope" value="Archaea"/>
</dbReference>
<dbReference type="HOGENOM" id="CLU_089568_1_2_2"/>
<dbReference type="OrthoDB" id="45235at2157"/>
<dbReference type="PhylomeDB" id="Q9V2A7"/>
<dbReference type="UniPathway" id="UPA00344"/>
<dbReference type="Proteomes" id="UP000000810">
    <property type="component" value="Chromosome"/>
</dbReference>
<dbReference type="Proteomes" id="UP000009139">
    <property type="component" value="Chromosome"/>
</dbReference>
<dbReference type="GO" id="GO:0030366">
    <property type="term" value="F:molybdopterin synthase activity"/>
    <property type="evidence" value="ECO:0007669"/>
    <property type="project" value="UniProtKB-EC"/>
</dbReference>
<dbReference type="GO" id="GO:0006777">
    <property type="term" value="P:Mo-molybdopterin cofactor biosynthetic process"/>
    <property type="evidence" value="ECO:0007669"/>
    <property type="project" value="UniProtKB-KW"/>
</dbReference>
<dbReference type="CDD" id="cd00756">
    <property type="entry name" value="MoaE"/>
    <property type="match status" value="1"/>
</dbReference>
<dbReference type="FunFam" id="3.90.1170.40:FF:000004">
    <property type="entry name" value="Molybdopterin biosynthesis protein MoeE"/>
    <property type="match status" value="1"/>
</dbReference>
<dbReference type="Gene3D" id="3.90.1170.40">
    <property type="entry name" value="Molybdopterin biosynthesis MoaE subunit"/>
    <property type="match status" value="1"/>
</dbReference>
<dbReference type="InterPro" id="IPR036563">
    <property type="entry name" value="MoaE_sf"/>
</dbReference>
<dbReference type="InterPro" id="IPR003448">
    <property type="entry name" value="Mopterin_biosynth_MoaE"/>
</dbReference>
<dbReference type="PANTHER" id="PTHR23404">
    <property type="entry name" value="MOLYBDOPTERIN SYNTHASE RELATED"/>
    <property type="match status" value="1"/>
</dbReference>
<dbReference type="Pfam" id="PF02391">
    <property type="entry name" value="MoaE"/>
    <property type="match status" value="1"/>
</dbReference>
<dbReference type="SUPFAM" id="SSF54690">
    <property type="entry name" value="Molybdopterin synthase subunit MoaE"/>
    <property type="match status" value="1"/>
</dbReference>
<gene>
    <name type="primary">moaE</name>
    <name type="ordered locus">PYRAB01670</name>
    <name type="ORF">PAB0110</name>
</gene>
<evidence type="ECO:0000250" key="1"/>
<evidence type="ECO:0000305" key="2"/>
<feature type="chain" id="PRO_0000163109" description="Molybdopterin synthase catalytic subunit">
    <location>
        <begin position="1"/>
        <end position="148"/>
    </location>
</feature>
<feature type="binding site" evidence="1">
    <location>
        <begin position="38"/>
        <end position="40"/>
    </location>
    <ligand>
        <name>substrate</name>
    </ligand>
</feature>
<feature type="binding site" evidence="1">
    <location>
        <begin position="104"/>
        <end position="105"/>
    </location>
    <ligand>
        <name>substrate</name>
    </ligand>
</feature>
<feature type="binding site" evidence="1">
    <location>
        <position position="120"/>
    </location>
    <ligand>
        <name>substrate</name>
    </ligand>
</feature>
<feature type="binding site" evidence="1">
    <location>
        <begin position="127"/>
        <end position="129"/>
    </location>
    <ligand>
        <name>substrate</name>
    </ligand>
</feature>
<reference key="1">
    <citation type="journal article" date="2003" name="Mol. Microbiol.">
        <title>An integrated analysis of the genome of the hyperthermophilic archaeon Pyrococcus abyssi.</title>
        <authorList>
            <person name="Cohen G.N."/>
            <person name="Barbe V."/>
            <person name="Flament D."/>
            <person name="Galperin M."/>
            <person name="Heilig R."/>
            <person name="Lecompte O."/>
            <person name="Poch O."/>
            <person name="Prieur D."/>
            <person name="Querellou J."/>
            <person name="Ripp R."/>
            <person name="Thierry J.-C."/>
            <person name="Van der Oost J."/>
            <person name="Weissenbach J."/>
            <person name="Zivanovic Y."/>
            <person name="Forterre P."/>
        </authorList>
    </citation>
    <scope>NUCLEOTIDE SEQUENCE [LARGE SCALE GENOMIC DNA]</scope>
    <source>
        <strain>GE5 / Orsay</strain>
    </source>
</reference>
<reference key="2">
    <citation type="journal article" date="2012" name="Curr. Microbiol.">
        <title>Re-annotation of two hyperthermophilic archaea Pyrococcus abyssi GE5 and Pyrococcus furiosus DSM 3638.</title>
        <authorList>
            <person name="Gao J."/>
            <person name="Wang J."/>
        </authorList>
    </citation>
    <scope>GENOME REANNOTATION</scope>
    <source>
        <strain>GE5 / Orsay</strain>
    </source>
</reference>
<organism>
    <name type="scientific">Pyrococcus abyssi (strain GE5 / Orsay)</name>
    <dbReference type="NCBI Taxonomy" id="272844"/>
    <lineage>
        <taxon>Archaea</taxon>
        <taxon>Methanobacteriati</taxon>
        <taxon>Methanobacteriota</taxon>
        <taxon>Thermococci</taxon>
        <taxon>Thermococcales</taxon>
        <taxon>Thermococcaceae</taxon>
        <taxon>Pyrococcus</taxon>
    </lineage>
</organism>